<reference key="1">
    <citation type="journal article" date="1994" name="EMBO J.">
        <title>Stch encodes the 'ATPase core' of a microsomal stress 70 protein.</title>
        <authorList>
            <person name="Otterson G.A."/>
            <person name="Flynn G.C."/>
            <person name="Kratzke R.A."/>
            <person name="Coxon A."/>
            <person name="Johnston P.G."/>
            <person name="Kaye F.J."/>
        </authorList>
    </citation>
    <scope>NUCLEOTIDE SEQUENCE [MRNA]</scope>
</reference>
<reference key="2">
    <citation type="submission" date="1999-02" db="EMBL/GenBank/DDBJ databases">
        <authorList>
            <person name="Blechschmidt K."/>
            <person name="Nordsiek G."/>
            <person name="Groet J."/>
            <person name="Nizetic D."/>
            <person name="Hildmann T."/>
            <person name="Drescher B."/>
            <person name="Weber J."/>
            <person name="Menzel U."/>
            <person name="Schattevoy R."/>
            <person name="Yaspo M.-L."/>
            <person name="Rosenthal A."/>
        </authorList>
    </citation>
    <scope>NUCLEOTIDE SEQUENCE [GENOMIC DNA]</scope>
</reference>
<reference key="3">
    <citation type="journal article" date="2004" name="Nat. Genet.">
        <title>Complete sequencing and characterization of 21,243 full-length human cDNAs.</title>
        <authorList>
            <person name="Ota T."/>
            <person name="Suzuki Y."/>
            <person name="Nishikawa T."/>
            <person name="Otsuki T."/>
            <person name="Sugiyama T."/>
            <person name="Irie R."/>
            <person name="Wakamatsu A."/>
            <person name="Hayashi K."/>
            <person name="Sato H."/>
            <person name="Nagai K."/>
            <person name="Kimura K."/>
            <person name="Makita H."/>
            <person name="Sekine M."/>
            <person name="Obayashi M."/>
            <person name="Nishi T."/>
            <person name="Shibahara T."/>
            <person name="Tanaka T."/>
            <person name="Ishii S."/>
            <person name="Yamamoto J."/>
            <person name="Saito K."/>
            <person name="Kawai Y."/>
            <person name="Isono Y."/>
            <person name="Nakamura Y."/>
            <person name="Nagahari K."/>
            <person name="Murakami K."/>
            <person name="Yasuda T."/>
            <person name="Iwayanagi T."/>
            <person name="Wagatsuma M."/>
            <person name="Shiratori A."/>
            <person name="Sudo H."/>
            <person name="Hosoiri T."/>
            <person name="Kaku Y."/>
            <person name="Kodaira H."/>
            <person name="Kondo H."/>
            <person name="Sugawara M."/>
            <person name="Takahashi M."/>
            <person name="Kanda K."/>
            <person name="Yokoi T."/>
            <person name="Furuya T."/>
            <person name="Kikkawa E."/>
            <person name="Omura Y."/>
            <person name="Abe K."/>
            <person name="Kamihara K."/>
            <person name="Katsuta N."/>
            <person name="Sato K."/>
            <person name="Tanikawa M."/>
            <person name="Yamazaki M."/>
            <person name="Ninomiya K."/>
            <person name="Ishibashi T."/>
            <person name="Yamashita H."/>
            <person name="Murakawa K."/>
            <person name="Fujimori K."/>
            <person name="Tanai H."/>
            <person name="Kimata M."/>
            <person name="Watanabe M."/>
            <person name="Hiraoka S."/>
            <person name="Chiba Y."/>
            <person name="Ishida S."/>
            <person name="Ono Y."/>
            <person name="Takiguchi S."/>
            <person name="Watanabe S."/>
            <person name="Yosida M."/>
            <person name="Hotuta T."/>
            <person name="Kusano J."/>
            <person name="Kanehori K."/>
            <person name="Takahashi-Fujii A."/>
            <person name="Hara H."/>
            <person name="Tanase T.-O."/>
            <person name="Nomura Y."/>
            <person name="Togiya S."/>
            <person name="Komai F."/>
            <person name="Hara R."/>
            <person name="Takeuchi K."/>
            <person name="Arita M."/>
            <person name="Imose N."/>
            <person name="Musashino K."/>
            <person name="Yuuki H."/>
            <person name="Oshima A."/>
            <person name="Sasaki N."/>
            <person name="Aotsuka S."/>
            <person name="Yoshikawa Y."/>
            <person name="Matsunawa H."/>
            <person name="Ichihara T."/>
            <person name="Shiohata N."/>
            <person name="Sano S."/>
            <person name="Moriya S."/>
            <person name="Momiyama H."/>
            <person name="Satoh N."/>
            <person name="Takami S."/>
            <person name="Terashima Y."/>
            <person name="Suzuki O."/>
            <person name="Nakagawa S."/>
            <person name="Senoh A."/>
            <person name="Mizoguchi H."/>
            <person name="Goto Y."/>
            <person name="Shimizu F."/>
            <person name="Wakebe H."/>
            <person name="Hishigaki H."/>
            <person name="Watanabe T."/>
            <person name="Sugiyama A."/>
            <person name="Takemoto M."/>
            <person name="Kawakami B."/>
            <person name="Yamazaki M."/>
            <person name="Watanabe K."/>
            <person name="Kumagai A."/>
            <person name="Itakura S."/>
            <person name="Fukuzumi Y."/>
            <person name="Fujimori Y."/>
            <person name="Komiyama M."/>
            <person name="Tashiro H."/>
            <person name="Tanigami A."/>
            <person name="Fujiwara T."/>
            <person name="Ono T."/>
            <person name="Yamada K."/>
            <person name="Fujii Y."/>
            <person name="Ozaki K."/>
            <person name="Hirao M."/>
            <person name="Ohmori Y."/>
            <person name="Kawabata A."/>
            <person name="Hikiji T."/>
            <person name="Kobatake N."/>
            <person name="Inagaki H."/>
            <person name="Ikema Y."/>
            <person name="Okamoto S."/>
            <person name="Okitani R."/>
            <person name="Kawakami T."/>
            <person name="Noguchi S."/>
            <person name="Itoh T."/>
            <person name="Shigeta K."/>
            <person name="Senba T."/>
            <person name="Matsumura K."/>
            <person name="Nakajima Y."/>
            <person name="Mizuno T."/>
            <person name="Morinaga M."/>
            <person name="Sasaki M."/>
            <person name="Togashi T."/>
            <person name="Oyama M."/>
            <person name="Hata H."/>
            <person name="Watanabe M."/>
            <person name="Komatsu T."/>
            <person name="Mizushima-Sugano J."/>
            <person name="Satoh T."/>
            <person name="Shirai Y."/>
            <person name="Takahashi Y."/>
            <person name="Nakagawa K."/>
            <person name="Okumura K."/>
            <person name="Nagase T."/>
            <person name="Nomura N."/>
            <person name="Kikuchi H."/>
            <person name="Masuho Y."/>
            <person name="Yamashita R."/>
            <person name="Nakai K."/>
            <person name="Yada T."/>
            <person name="Nakamura Y."/>
            <person name="Ohara O."/>
            <person name="Isogai T."/>
            <person name="Sugano S."/>
        </authorList>
    </citation>
    <scope>NUCLEOTIDE SEQUENCE [LARGE SCALE MRNA]</scope>
    <source>
        <tissue>Amygdala</tissue>
    </source>
</reference>
<reference key="4">
    <citation type="journal article" date="2000" name="Nature">
        <title>The DNA sequence of human chromosome 21.</title>
        <authorList>
            <person name="Hattori M."/>
            <person name="Fujiyama A."/>
            <person name="Taylor T.D."/>
            <person name="Watanabe H."/>
            <person name="Yada T."/>
            <person name="Park H.-S."/>
            <person name="Toyoda A."/>
            <person name="Ishii K."/>
            <person name="Totoki Y."/>
            <person name="Choi D.-K."/>
            <person name="Groner Y."/>
            <person name="Soeda E."/>
            <person name="Ohki M."/>
            <person name="Takagi T."/>
            <person name="Sakaki Y."/>
            <person name="Taudien S."/>
            <person name="Blechschmidt K."/>
            <person name="Polley A."/>
            <person name="Menzel U."/>
            <person name="Delabar J."/>
            <person name="Kumpf K."/>
            <person name="Lehmann R."/>
            <person name="Patterson D."/>
            <person name="Reichwald K."/>
            <person name="Rump A."/>
            <person name="Schillhabel M."/>
            <person name="Schudy A."/>
            <person name="Zimmermann W."/>
            <person name="Rosenthal A."/>
            <person name="Kudoh J."/>
            <person name="Shibuya K."/>
            <person name="Kawasaki K."/>
            <person name="Asakawa S."/>
            <person name="Shintani A."/>
            <person name="Sasaki T."/>
            <person name="Nagamine K."/>
            <person name="Mitsuyama S."/>
            <person name="Antonarakis S.E."/>
            <person name="Minoshima S."/>
            <person name="Shimizu N."/>
            <person name="Nordsiek G."/>
            <person name="Hornischer K."/>
            <person name="Brandt P."/>
            <person name="Scharfe M."/>
            <person name="Schoen O."/>
            <person name="Desario A."/>
            <person name="Reichelt J."/>
            <person name="Kauer G."/>
            <person name="Bloecker H."/>
            <person name="Ramser J."/>
            <person name="Beck A."/>
            <person name="Klages S."/>
            <person name="Hennig S."/>
            <person name="Riesselmann L."/>
            <person name="Dagand E."/>
            <person name="Wehrmeyer S."/>
            <person name="Borzym K."/>
            <person name="Gardiner K."/>
            <person name="Nizetic D."/>
            <person name="Francis F."/>
            <person name="Lehrach H."/>
            <person name="Reinhardt R."/>
            <person name="Yaspo M.-L."/>
        </authorList>
    </citation>
    <scope>NUCLEOTIDE SEQUENCE [LARGE SCALE GENOMIC DNA]</scope>
</reference>
<reference key="5">
    <citation type="submission" date="2005-09" db="EMBL/GenBank/DDBJ databases">
        <authorList>
            <person name="Mural R.J."/>
            <person name="Istrail S."/>
            <person name="Sutton G.G."/>
            <person name="Florea L."/>
            <person name="Halpern A.L."/>
            <person name="Mobarry C.M."/>
            <person name="Lippert R."/>
            <person name="Walenz B."/>
            <person name="Shatkay H."/>
            <person name="Dew I."/>
            <person name="Miller J.R."/>
            <person name="Flanigan M.J."/>
            <person name="Edwards N.J."/>
            <person name="Bolanos R."/>
            <person name="Fasulo D."/>
            <person name="Halldorsson B.V."/>
            <person name="Hannenhalli S."/>
            <person name="Turner R."/>
            <person name="Yooseph S."/>
            <person name="Lu F."/>
            <person name="Nusskern D.R."/>
            <person name="Shue B.C."/>
            <person name="Zheng X.H."/>
            <person name="Zhong F."/>
            <person name="Delcher A.L."/>
            <person name="Huson D.H."/>
            <person name="Kravitz S.A."/>
            <person name="Mouchard L."/>
            <person name="Reinert K."/>
            <person name="Remington K.A."/>
            <person name="Clark A.G."/>
            <person name="Waterman M.S."/>
            <person name="Eichler E.E."/>
            <person name="Adams M.D."/>
            <person name="Hunkapiller M.W."/>
            <person name="Myers E.W."/>
            <person name="Venter J.C."/>
        </authorList>
    </citation>
    <scope>NUCLEOTIDE SEQUENCE [LARGE SCALE GENOMIC DNA]</scope>
</reference>
<reference key="6">
    <citation type="journal article" date="2004" name="Genome Res.">
        <title>The status, quality, and expansion of the NIH full-length cDNA project: the Mammalian Gene Collection (MGC).</title>
        <authorList>
            <consortium name="The MGC Project Team"/>
        </authorList>
    </citation>
    <scope>NUCLEOTIDE SEQUENCE [LARGE SCALE MRNA]</scope>
    <source>
        <tissue>Testis</tissue>
    </source>
</reference>
<reference key="7">
    <citation type="journal article" date="2000" name="FEBS Lett.">
        <title>A family of ubiquitin-like proteins binds the ATPase domain of Hsp70-like Stch.</title>
        <authorList>
            <person name="Kaye F.J."/>
            <person name="Modi S."/>
            <person name="Ivanovska I."/>
            <person name="Koonin E.V."/>
            <person name="Thress K."/>
            <person name="Kubo A."/>
            <person name="Kornbluth S."/>
            <person name="Rose M.D."/>
        </authorList>
    </citation>
    <scope>INTERACTION WITH UBQLN2</scope>
</reference>
<reference key="8">
    <citation type="journal article" date="2011" name="BMC Syst. Biol.">
        <title>Initial characterization of the human central proteome.</title>
        <authorList>
            <person name="Burkard T.R."/>
            <person name="Planyavsky M."/>
            <person name="Kaupe I."/>
            <person name="Breitwieser F.P."/>
            <person name="Buerckstuemmer T."/>
            <person name="Bennett K.L."/>
            <person name="Superti-Furga G."/>
            <person name="Colinge J."/>
        </authorList>
    </citation>
    <scope>IDENTIFICATION BY MASS SPECTROMETRY [LARGE SCALE ANALYSIS]</scope>
</reference>
<name>HSP13_HUMAN</name>
<dbReference type="EMBL" id="U04735">
    <property type="protein sequence ID" value="AAA16954.1"/>
    <property type="molecule type" value="mRNA"/>
</dbReference>
<dbReference type="EMBL" id="AF130249">
    <property type="protein sequence ID" value="AAD21091.1"/>
    <property type="molecule type" value="Genomic_DNA"/>
</dbReference>
<dbReference type="EMBL" id="AK312396">
    <property type="protein sequence ID" value="BAG35313.1"/>
    <property type="molecule type" value="mRNA"/>
</dbReference>
<dbReference type="EMBL" id="AL163206">
    <property type="protein sequence ID" value="CAB90390.1"/>
    <property type="molecule type" value="Genomic_DNA"/>
</dbReference>
<dbReference type="EMBL" id="CH471079">
    <property type="protein sequence ID" value="EAX10056.1"/>
    <property type="molecule type" value="Genomic_DNA"/>
</dbReference>
<dbReference type="EMBL" id="BC036370">
    <property type="protein sequence ID" value="AAH36370.1"/>
    <property type="molecule type" value="mRNA"/>
</dbReference>
<dbReference type="CCDS" id="CCDS13567.1"/>
<dbReference type="PIR" id="S42631">
    <property type="entry name" value="S42631"/>
</dbReference>
<dbReference type="RefSeq" id="NP_008879.3">
    <property type="nucleotide sequence ID" value="NM_006948.4"/>
</dbReference>
<dbReference type="SMR" id="P48723"/>
<dbReference type="BioGRID" id="112659">
    <property type="interactions" value="163"/>
</dbReference>
<dbReference type="FunCoup" id="P48723">
    <property type="interactions" value="2853"/>
</dbReference>
<dbReference type="IntAct" id="P48723">
    <property type="interactions" value="81"/>
</dbReference>
<dbReference type="MINT" id="P48723"/>
<dbReference type="STRING" id="9606.ENSP00000285667"/>
<dbReference type="DrugBank" id="DB09130">
    <property type="generic name" value="Copper"/>
</dbReference>
<dbReference type="GlyConnect" id="1294">
    <property type="glycosylation" value="5 N-Linked glycans (2 sites)"/>
</dbReference>
<dbReference type="GlyCosmos" id="P48723">
    <property type="glycosylation" value="2 sites, 4 glycans"/>
</dbReference>
<dbReference type="GlyGen" id="P48723">
    <property type="glycosylation" value="5 sites, 9 N-linked glycans (3 sites), 2 O-linked glycans (2 sites)"/>
</dbReference>
<dbReference type="iPTMnet" id="P48723"/>
<dbReference type="PhosphoSitePlus" id="P48723"/>
<dbReference type="BioMuta" id="HSPA13"/>
<dbReference type="DMDM" id="1351125"/>
<dbReference type="REPRODUCTION-2DPAGE" id="IPI00299299"/>
<dbReference type="jPOST" id="P48723"/>
<dbReference type="MassIVE" id="P48723"/>
<dbReference type="PaxDb" id="9606-ENSP00000285667"/>
<dbReference type="PeptideAtlas" id="P48723"/>
<dbReference type="ProteomicsDB" id="55924"/>
<dbReference type="Pumba" id="P48723"/>
<dbReference type="TopDownProteomics" id="P48723"/>
<dbReference type="Antibodypedia" id="2522">
    <property type="antibodies" value="192 antibodies from 29 providers"/>
</dbReference>
<dbReference type="DNASU" id="6782"/>
<dbReference type="Ensembl" id="ENST00000285667.4">
    <property type="protein sequence ID" value="ENSP00000285667.3"/>
    <property type="gene ID" value="ENSG00000155304.6"/>
</dbReference>
<dbReference type="GeneID" id="6782"/>
<dbReference type="KEGG" id="hsa:6782"/>
<dbReference type="MANE-Select" id="ENST00000285667.4">
    <property type="protein sequence ID" value="ENSP00000285667.3"/>
    <property type="RefSeq nucleotide sequence ID" value="NM_006948.5"/>
    <property type="RefSeq protein sequence ID" value="NP_008879.3"/>
</dbReference>
<dbReference type="UCSC" id="uc002yjt.4">
    <property type="organism name" value="human"/>
</dbReference>
<dbReference type="AGR" id="HGNC:11375"/>
<dbReference type="CTD" id="6782"/>
<dbReference type="DisGeNET" id="6782"/>
<dbReference type="GeneCards" id="HSPA13"/>
<dbReference type="HGNC" id="HGNC:11375">
    <property type="gene designation" value="HSPA13"/>
</dbReference>
<dbReference type="HPA" id="ENSG00000155304">
    <property type="expression patterns" value="Low tissue specificity"/>
</dbReference>
<dbReference type="MIM" id="601100">
    <property type="type" value="gene"/>
</dbReference>
<dbReference type="neXtProt" id="NX_P48723"/>
<dbReference type="OpenTargets" id="ENSG00000155304"/>
<dbReference type="PharmGKB" id="PA162391697"/>
<dbReference type="VEuPathDB" id="HostDB:ENSG00000155304"/>
<dbReference type="eggNOG" id="KOG0101">
    <property type="taxonomic scope" value="Eukaryota"/>
</dbReference>
<dbReference type="GeneTree" id="ENSGT00890000139503"/>
<dbReference type="HOGENOM" id="CLU_005965_0_3_1"/>
<dbReference type="InParanoid" id="P48723"/>
<dbReference type="OMA" id="GGMFITR"/>
<dbReference type="OrthoDB" id="2401965at2759"/>
<dbReference type="PAN-GO" id="P48723">
    <property type="GO annotations" value="11 GO annotations based on evolutionary models"/>
</dbReference>
<dbReference type="PhylomeDB" id="P48723"/>
<dbReference type="TreeFam" id="TF105047"/>
<dbReference type="PathwayCommons" id="P48723"/>
<dbReference type="Reactome" id="R-HSA-3371453">
    <property type="pathway name" value="Regulation of HSF1-mediated heat shock response"/>
</dbReference>
<dbReference type="SignaLink" id="P48723"/>
<dbReference type="BioGRID-ORCS" id="6782">
    <property type="hits" value="117 hits in 1162 CRISPR screens"/>
</dbReference>
<dbReference type="ChiTaRS" id="HSPA13">
    <property type="organism name" value="human"/>
</dbReference>
<dbReference type="GeneWiki" id="STCH"/>
<dbReference type="GenomeRNAi" id="6782"/>
<dbReference type="Pharos" id="P48723">
    <property type="development level" value="Tbio"/>
</dbReference>
<dbReference type="PRO" id="PR:P48723"/>
<dbReference type="Proteomes" id="UP000005640">
    <property type="component" value="Chromosome 21"/>
</dbReference>
<dbReference type="RNAct" id="P48723">
    <property type="molecule type" value="protein"/>
</dbReference>
<dbReference type="Bgee" id="ENSG00000155304">
    <property type="expression patterns" value="Expressed in ventricular zone and 208 other cell types or tissues"/>
</dbReference>
<dbReference type="ExpressionAtlas" id="P48723">
    <property type="expression patterns" value="baseline and differential"/>
</dbReference>
<dbReference type="GO" id="GO:0005737">
    <property type="term" value="C:cytoplasm"/>
    <property type="evidence" value="ECO:0000318"/>
    <property type="project" value="GO_Central"/>
</dbReference>
<dbReference type="GO" id="GO:0005829">
    <property type="term" value="C:cytosol"/>
    <property type="evidence" value="ECO:0000318"/>
    <property type="project" value="GO_Central"/>
</dbReference>
<dbReference type="GO" id="GO:0005783">
    <property type="term" value="C:endoplasmic reticulum"/>
    <property type="evidence" value="ECO:0007669"/>
    <property type="project" value="UniProtKB-SubCell"/>
</dbReference>
<dbReference type="GO" id="GO:0070062">
    <property type="term" value="C:extracellular exosome"/>
    <property type="evidence" value="ECO:0007005"/>
    <property type="project" value="UniProtKB"/>
</dbReference>
<dbReference type="GO" id="GO:0043231">
    <property type="term" value="C:intracellular membrane-bounded organelle"/>
    <property type="evidence" value="ECO:0000304"/>
    <property type="project" value="ProtInc"/>
</dbReference>
<dbReference type="GO" id="GO:0005634">
    <property type="term" value="C:nucleus"/>
    <property type="evidence" value="ECO:0000318"/>
    <property type="project" value="GO_Central"/>
</dbReference>
<dbReference type="GO" id="GO:0005886">
    <property type="term" value="C:plasma membrane"/>
    <property type="evidence" value="ECO:0000318"/>
    <property type="project" value="GO_Central"/>
</dbReference>
<dbReference type="GO" id="GO:0005524">
    <property type="term" value="F:ATP binding"/>
    <property type="evidence" value="ECO:0007669"/>
    <property type="project" value="UniProtKB-KW"/>
</dbReference>
<dbReference type="GO" id="GO:0016887">
    <property type="term" value="F:ATP hydrolysis activity"/>
    <property type="evidence" value="ECO:0000318"/>
    <property type="project" value="GO_Central"/>
</dbReference>
<dbReference type="GO" id="GO:0140662">
    <property type="term" value="F:ATP-dependent protein folding chaperone"/>
    <property type="evidence" value="ECO:0007669"/>
    <property type="project" value="InterPro"/>
</dbReference>
<dbReference type="GO" id="GO:0031072">
    <property type="term" value="F:heat shock protein binding"/>
    <property type="evidence" value="ECO:0000318"/>
    <property type="project" value="GO_Central"/>
</dbReference>
<dbReference type="GO" id="GO:0044183">
    <property type="term" value="F:protein folding chaperone"/>
    <property type="evidence" value="ECO:0000318"/>
    <property type="project" value="GO_Central"/>
</dbReference>
<dbReference type="GO" id="GO:0051085">
    <property type="term" value="P:chaperone cofactor-dependent protein refolding"/>
    <property type="evidence" value="ECO:0000318"/>
    <property type="project" value="GO_Central"/>
</dbReference>
<dbReference type="GO" id="GO:0042026">
    <property type="term" value="P:protein refolding"/>
    <property type="evidence" value="ECO:0000318"/>
    <property type="project" value="GO_Central"/>
</dbReference>
<dbReference type="CDD" id="cd10237">
    <property type="entry name" value="ASKHA_NBD_HSP70_HSPA13"/>
    <property type="match status" value="1"/>
</dbReference>
<dbReference type="FunFam" id="3.30.30.30:FF:000007">
    <property type="entry name" value="Heat shock 70 kDa protein 13"/>
    <property type="match status" value="1"/>
</dbReference>
<dbReference type="FunFam" id="3.30.420.40:FF:000099">
    <property type="entry name" value="Heat shock 70 kDa protein 13"/>
    <property type="match status" value="1"/>
</dbReference>
<dbReference type="FunFam" id="3.30.420.40:FF:000103">
    <property type="entry name" value="Heat shock 70 kDa protein 13"/>
    <property type="match status" value="1"/>
</dbReference>
<dbReference type="FunFam" id="3.90.640.10:FF:000037">
    <property type="entry name" value="Heat shock 70 kDa protein 13"/>
    <property type="match status" value="1"/>
</dbReference>
<dbReference type="FunFam" id="3.90.640.10:FF:000022">
    <property type="entry name" value="heat shock 70 kDa protein 13"/>
    <property type="match status" value="1"/>
</dbReference>
<dbReference type="FunFam" id="3.30.420.40:FF:000110">
    <property type="entry name" value="heat shock 70 kDa protein 13 isoform X1"/>
    <property type="match status" value="1"/>
</dbReference>
<dbReference type="Gene3D" id="3.30.30.30">
    <property type="match status" value="1"/>
</dbReference>
<dbReference type="Gene3D" id="3.30.420.40">
    <property type="match status" value="4"/>
</dbReference>
<dbReference type="Gene3D" id="3.90.640.10">
    <property type="entry name" value="Actin, Chain A, domain 4"/>
    <property type="match status" value="2"/>
</dbReference>
<dbReference type="InterPro" id="IPR043129">
    <property type="entry name" value="ATPase_NBD"/>
</dbReference>
<dbReference type="InterPro" id="IPR018181">
    <property type="entry name" value="Heat_shock_70_CS"/>
</dbReference>
<dbReference type="InterPro" id="IPR013126">
    <property type="entry name" value="Hsp_70_fam"/>
</dbReference>
<dbReference type="InterPro" id="IPR042048">
    <property type="entry name" value="HSPA13"/>
</dbReference>
<dbReference type="PANTHER" id="PTHR19375">
    <property type="entry name" value="HEAT SHOCK PROTEIN 70KDA"/>
    <property type="match status" value="1"/>
</dbReference>
<dbReference type="Pfam" id="PF00012">
    <property type="entry name" value="HSP70"/>
    <property type="match status" value="2"/>
</dbReference>
<dbReference type="PRINTS" id="PR00301">
    <property type="entry name" value="HEATSHOCK70"/>
</dbReference>
<dbReference type="SUPFAM" id="SSF53067">
    <property type="entry name" value="Actin-like ATPase domain"/>
    <property type="match status" value="2"/>
</dbReference>
<dbReference type="PROSITE" id="PS00297">
    <property type="entry name" value="HSP70_1"/>
    <property type="match status" value="1"/>
</dbReference>
<dbReference type="PROSITE" id="PS00329">
    <property type="entry name" value="HSP70_2"/>
    <property type="match status" value="1"/>
</dbReference>
<dbReference type="PROSITE" id="PS01036">
    <property type="entry name" value="HSP70_3"/>
    <property type="match status" value="1"/>
</dbReference>
<organism>
    <name type="scientific">Homo sapiens</name>
    <name type="common">Human</name>
    <dbReference type="NCBI Taxonomy" id="9606"/>
    <lineage>
        <taxon>Eukaryota</taxon>
        <taxon>Metazoa</taxon>
        <taxon>Chordata</taxon>
        <taxon>Craniata</taxon>
        <taxon>Vertebrata</taxon>
        <taxon>Euteleostomi</taxon>
        <taxon>Mammalia</taxon>
        <taxon>Eutheria</taxon>
        <taxon>Euarchontoglires</taxon>
        <taxon>Primates</taxon>
        <taxon>Haplorrhini</taxon>
        <taxon>Catarrhini</taxon>
        <taxon>Hominidae</taxon>
        <taxon>Homo</taxon>
    </lineage>
</organism>
<accession>P48723</accession>
<accession>B2R616</accession>
<accession>Q8NE40</accession>
<proteinExistence type="evidence at protein level"/>
<protein>
    <recommendedName>
        <fullName>Heat shock 70 kDa protein 13</fullName>
    </recommendedName>
    <alternativeName>
        <fullName>Heat shock protein family A member 13</fullName>
    </alternativeName>
    <alternativeName>
        <fullName>Microsomal stress-70 protein ATPase core</fullName>
    </alternativeName>
    <alternativeName>
        <fullName>Stress-70 protein chaperone microsome-associated 60 kDa protein</fullName>
    </alternativeName>
</protein>
<feature type="signal peptide" evidence="1">
    <location>
        <begin position="1"/>
        <end position="22"/>
    </location>
</feature>
<feature type="chain" id="PRO_0000013558" description="Heat shock 70 kDa protein 13">
    <location>
        <begin position="23"/>
        <end position="471"/>
    </location>
</feature>
<feature type="region of interest" description="Disordered" evidence="2">
    <location>
        <begin position="315"/>
        <end position="352"/>
    </location>
</feature>
<feature type="compositionally biased region" description="Basic and acidic residues" evidence="2">
    <location>
        <begin position="315"/>
        <end position="341"/>
    </location>
</feature>
<feature type="sequence conflict" description="In Ref. 6; AAH36370." evidence="3" ref="6">
    <original>S</original>
    <variation>F</variation>
    <location>
        <position position="450"/>
    </location>
</feature>
<gene>
    <name type="primary">HSPA13</name>
    <name type="synonym">STCH</name>
</gene>
<keyword id="KW-0067">ATP-binding</keyword>
<keyword id="KW-0256">Endoplasmic reticulum</keyword>
<keyword id="KW-0492">Microsome</keyword>
<keyword id="KW-0547">Nucleotide-binding</keyword>
<keyword id="KW-1267">Proteomics identification</keyword>
<keyword id="KW-1185">Reference proteome</keyword>
<keyword id="KW-0732">Signal</keyword>
<comment type="function">
    <text>Has peptide-independent ATPase activity.</text>
</comment>
<comment type="subunit">
    <text>Binds UBQLN2.</text>
</comment>
<comment type="interaction">
    <interactant intactId="EBI-750892">
        <id>P48723</id>
    </interactant>
    <interactant intactId="EBI-21511746">
        <id>O43286</id>
        <label>B4GALT5</label>
    </interactant>
    <organismsDiffer>false</organismsDiffer>
    <experiments>2</experiments>
</comment>
<comment type="interaction">
    <interactant intactId="EBI-750892">
        <id>P48723</id>
    </interactant>
    <interactant intactId="EBI-10239205">
        <id>Q24JT5</id>
        <label>CRYGA</label>
    </interactant>
    <organismsDiffer>false</organismsDiffer>
    <experiments>3</experiments>
</comment>
<comment type="interaction">
    <interactant intactId="EBI-750892">
        <id>P48723</id>
    </interactant>
    <interactant intactId="EBI-347996">
        <id>O43765</id>
        <label>SGTA</label>
    </interactant>
    <organismsDiffer>false</organismsDiffer>
    <experiments>8</experiments>
</comment>
<comment type="interaction">
    <interactant intactId="EBI-750892">
        <id>P48723</id>
    </interactant>
    <interactant intactId="EBI-744081">
        <id>Q96EQ0</id>
        <label>SGTB</label>
    </interactant>
    <organismsDiffer>false</organismsDiffer>
    <experiments>6</experiments>
</comment>
<comment type="interaction">
    <interactant intactId="EBI-750892">
        <id>P48723</id>
    </interactant>
    <interactant intactId="EBI-741480">
        <id>Q9UMX0</id>
        <label>UBQLN1</label>
    </interactant>
    <organismsDiffer>false</organismsDiffer>
    <experiments>8</experiments>
</comment>
<comment type="interaction">
    <interactant intactId="EBI-750892">
        <id>P48723</id>
    </interactant>
    <interactant intactId="EBI-10173939">
        <id>Q9UMX0-2</id>
        <label>UBQLN1</label>
    </interactant>
    <organismsDiffer>false</organismsDiffer>
    <experiments>4</experiments>
</comment>
<comment type="interaction">
    <interactant intactId="EBI-750892">
        <id>P48723</id>
    </interactant>
    <interactant intactId="EBI-947187">
        <id>Q9UHD9</id>
        <label>UBQLN2</label>
    </interactant>
    <organismsDiffer>false</organismsDiffer>
    <experiments>6</experiments>
</comment>
<comment type="interaction">
    <interactant intactId="EBI-750892">
        <id>P48723</id>
    </interactant>
    <interactant intactId="EBI-711226">
        <id>Q9NRR5</id>
        <label>UBQLN4</label>
    </interactant>
    <organismsDiffer>false</organismsDiffer>
    <experiments>3</experiments>
</comment>
<comment type="subcellular location">
    <subcellularLocation>
        <location>Microsome</location>
    </subcellularLocation>
    <subcellularLocation>
        <location>Endoplasmic reticulum</location>
    </subcellularLocation>
</comment>
<comment type="tissue specificity">
    <text>Constitutively expressed in all tissues.</text>
</comment>
<comment type="similarity">
    <text evidence="3">Belongs to the heat shock protein 70 family.</text>
</comment>
<sequence>MAREMTILGSAVLTLLLAGYLAQQYLPLPTPKVIGIDLGTTYCSVGVFFPGTGKVKVIPDENGHISIPSMVSFTDNDVYVGYESVELADSNPQNTIYDAKRFIGKIFTAEELEAEIGRYPFKVLNKNGMVEFSVTSNETITVSPEYVGSRLLLKLKEMAEAYLGMPVANAVISVPAEFDLKQRNSTIEAANLAGLKILRVINEPTAAAMAYGLHKADVFHVLVIDLGGGTLDVSLLNKQGGMFLTRAMSGNNKLGGQDFNQRLLQYLYKQIYQTYGFVPSRKEEIHRLRQAVEMVKLNLTLHQSAQLSVLLTVEEQDRKEPHSSDTELPKDKLSSADDHRVNSGFGRGLSDKKSGESQVLFETEISRKLFDTLNEDLFQKILVPIQQVLKEGHLEKTEIDEVVLVGGSTRIPRIRQVIQEFFGKDPNTSVDPDLAVVTGVAIQAGIDGGSWPLQVSALEIPNKHLQKTNFN</sequence>
<evidence type="ECO:0000255" key="1"/>
<evidence type="ECO:0000256" key="2">
    <source>
        <dbReference type="SAM" id="MobiDB-lite"/>
    </source>
</evidence>
<evidence type="ECO:0000305" key="3"/>